<feature type="chain" id="PRO_0000055004" description="Probable ATP-dependent RNA helicase Dbp45A">
    <location>
        <begin position="1"/>
        <end position="521"/>
    </location>
</feature>
<feature type="domain" description="Helicase ATP-binding" evidence="1">
    <location>
        <begin position="38"/>
        <end position="209"/>
    </location>
</feature>
<feature type="domain" description="Helicase C-terminal" evidence="2">
    <location>
        <begin position="237"/>
        <end position="386"/>
    </location>
</feature>
<feature type="region of interest" description="Disordered" evidence="3">
    <location>
        <begin position="448"/>
        <end position="521"/>
    </location>
</feature>
<feature type="short sequence motif" description="Q motif">
    <location>
        <begin position="7"/>
        <end position="35"/>
    </location>
</feature>
<feature type="short sequence motif" description="DEAD box">
    <location>
        <begin position="157"/>
        <end position="160"/>
    </location>
</feature>
<feature type="compositionally biased region" description="Basic and acidic residues" evidence="3">
    <location>
        <begin position="460"/>
        <end position="482"/>
    </location>
</feature>
<feature type="compositionally biased region" description="Basic and acidic residues" evidence="3">
    <location>
        <begin position="502"/>
        <end position="521"/>
    </location>
</feature>
<feature type="binding site" evidence="1">
    <location>
        <begin position="51"/>
        <end position="58"/>
    </location>
    <ligand>
        <name>ATP</name>
        <dbReference type="ChEBI" id="CHEBI:30616"/>
    </ligand>
</feature>
<feature type="sequence conflict" description="In Ref. 1; AAA16339/CAA80804." evidence="4" ref="1">
    <original>R</original>
    <variation>P</variation>
    <location>
        <position position="161"/>
    </location>
</feature>
<feature type="sequence conflict" description="In Ref. 1; AAA16339." evidence="4" ref="1">
    <original>SQDSDVA</original>
    <variation>CEASAVR</variation>
    <location>
        <begin position="211"/>
        <end position="217"/>
    </location>
</feature>
<feature type="sequence conflict" description="In Ref. 1; AAA16339/CAA80804." evidence="4" ref="1">
    <original>QR</original>
    <variation>HG</variation>
    <location>
        <begin position="224"/>
        <end position="225"/>
    </location>
</feature>
<feature type="sequence conflict" description="In Ref. 1; AAA16339/CAA80804." evidence="4" ref="1">
    <original>LC</original>
    <variation>VS</variation>
    <location>
        <begin position="228"/>
        <end position="229"/>
    </location>
</feature>
<feature type="sequence conflict" description="In Ref. 1; AAA16339/CAA80804." evidence="4" ref="1">
    <original>R</original>
    <variation>P</variation>
    <location>
        <position position="234"/>
    </location>
</feature>
<feature type="sequence conflict" description="In Ref. 1; AAA16339/CAA80804." evidence="4" ref="1">
    <original>M</original>
    <variation>I</variation>
    <location>
        <position position="327"/>
    </location>
</feature>
<feature type="sequence conflict" description="In Ref. 1; AAA16339/CAA80804." evidence="4" ref="1">
    <original>D</original>
    <variation>C</variation>
    <location>
        <position position="407"/>
    </location>
</feature>
<feature type="sequence conflict" description="In Ref. 1; AAA16339/CAA80804." evidence="4" ref="1">
    <original>P</original>
    <variation>S</variation>
    <location>
        <position position="456"/>
    </location>
</feature>
<feature type="sequence conflict" description="In Ref. 1; AAA16339/CAA80804." evidence="4" ref="1">
    <original>D</original>
    <variation>Y</variation>
    <location>
        <position position="493"/>
    </location>
</feature>
<feature type="sequence conflict" description="In Ref. 1; AAA16339." evidence="4" ref="1">
    <original>KKDKA</original>
    <variation>NKSKGKIKRDV</variation>
    <location>
        <begin position="517"/>
        <end position="521"/>
    </location>
</feature>
<proteinExistence type="evidence at transcript level"/>
<reference key="1">
    <citation type="journal article" date="1993" name="Biochim. Biophys. Acta">
        <title>Dbp45A encodes a Drosophila DEAD box protein with similarity to a putative yeast helicase involved in ribosome assembly.</title>
        <authorList>
            <person name="Lavoie C.A."/>
            <person name="Harvey M."/>
            <person name="Lasko P.F."/>
        </authorList>
    </citation>
    <scope>NUCLEOTIDE SEQUENCE</scope>
</reference>
<reference key="2">
    <citation type="journal article" date="2000" name="Science">
        <title>The genome sequence of Drosophila melanogaster.</title>
        <authorList>
            <person name="Adams M.D."/>
            <person name="Celniker S.E."/>
            <person name="Holt R.A."/>
            <person name="Evans C.A."/>
            <person name="Gocayne J.D."/>
            <person name="Amanatides P.G."/>
            <person name="Scherer S.E."/>
            <person name="Li P.W."/>
            <person name="Hoskins R.A."/>
            <person name="Galle R.F."/>
            <person name="George R.A."/>
            <person name="Lewis S.E."/>
            <person name="Richards S."/>
            <person name="Ashburner M."/>
            <person name="Henderson S.N."/>
            <person name="Sutton G.G."/>
            <person name="Wortman J.R."/>
            <person name="Yandell M.D."/>
            <person name="Zhang Q."/>
            <person name="Chen L.X."/>
            <person name="Brandon R.C."/>
            <person name="Rogers Y.-H.C."/>
            <person name="Blazej R.G."/>
            <person name="Champe M."/>
            <person name="Pfeiffer B.D."/>
            <person name="Wan K.H."/>
            <person name="Doyle C."/>
            <person name="Baxter E.G."/>
            <person name="Helt G."/>
            <person name="Nelson C.R."/>
            <person name="Miklos G.L.G."/>
            <person name="Abril J.F."/>
            <person name="Agbayani A."/>
            <person name="An H.-J."/>
            <person name="Andrews-Pfannkoch C."/>
            <person name="Baldwin D."/>
            <person name="Ballew R.M."/>
            <person name="Basu A."/>
            <person name="Baxendale J."/>
            <person name="Bayraktaroglu L."/>
            <person name="Beasley E.M."/>
            <person name="Beeson K.Y."/>
            <person name="Benos P.V."/>
            <person name="Berman B.P."/>
            <person name="Bhandari D."/>
            <person name="Bolshakov S."/>
            <person name="Borkova D."/>
            <person name="Botchan M.R."/>
            <person name="Bouck J."/>
            <person name="Brokstein P."/>
            <person name="Brottier P."/>
            <person name="Burtis K.C."/>
            <person name="Busam D.A."/>
            <person name="Butler H."/>
            <person name="Cadieu E."/>
            <person name="Center A."/>
            <person name="Chandra I."/>
            <person name="Cherry J.M."/>
            <person name="Cawley S."/>
            <person name="Dahlke C."/>
            <person name="Davenport L.B."/>
            <person name="Davies P."/>
            <person name="de Pablos B."/>
            <person name="Delcher A."/>
            <person name="Deng Z."/>
            <person name="Mays A.D."/>
            <person name="Dew I."/>
            <person name="Dietz S.M."/>
            <person name="Dodson K."/>
            <person name="Doup L.E."/>
            <person name="Downes M."/>
            <person name="Dugan-Rocha S."/>
            <person name="Dunkov B.C."/>
            <person name="Dunn P."/>
            <person name="Durbin K.J."/>
            <person name="Evangelista C.C."/>
            <person name="Ferraz C."/>
            <person name="Ferriera S."/>
            <person name="Fleischmann W."/>
            <person name="Fosler C."/>
            <person name="Gabrielian A.E."/>
            <person name="Garg N.S."/>
            <person name="Gelbart W.M."/>
            <person name="Glasser K."/>
            <person name="Glodek A."/>
            <person name="Gong F."/>
            <person name="Gorrell J.H."/>
            <person name="Gu Z."/>
            <person name="Guan P."/>
            <person name="Harris M."/>
            <person name="Harris N.L."/>
            <person name="Harvey D.A."/>
            <person name="Heiman T.J."/>
            <person name="Hernandez J.R."/>
            <person name="Houck J."/>
            <person name="Hostin D."/>
            <person name="Houston K.A."/>
            <person name="Howland T.J."/>
            <person name="Wei M.-H."/>
            <person name="Ibegwam C."/>
            <person name="Jalali M."/>
            <person name="Kalush F."/>
            <person name="Karpen G.H."/>
            <person name="Ke Z."/>
            <person name="Kennison J.A."/>
            <person name="Ketchum K.A."/>
            <person name="Kimmel B.E."/>
            <person name="Kodira C.D."/>
            <person name="Kraft C.L."/>
            <person name="Kravitz S."/>
            <person name="Kulp D."/>
            <person name="Lai Z."/>
            <person name="Lasko P."/>
            <person name="Lei Y."/>
            <person name="Levitsky A.A."/>
            <person name="Li J.H."/>
            <person name="Li Z."/>
            <person name="Liang Y."/>
            <person name="Lin X."/>
            <person name="Liu X."/>
            <person name="Mattei B."/>
            <person name="McIntosh T.C."/>
            <person name="McLeod M.P."/>
            <person name="McPherson D."/>
            <person name="Merkulov G."/>
            <person name="Milshina N.V."/>
            <person name="Mobarry C."/>
            <person name="Morris J."/>
            <person name="Moshrefi A."/>
            <person name="Mount S.M."/>
            <person name="Moy M."/>
            <person name="Murphy B."/>
            <person name="Murphy L."/>
            <person name="Muzny D.M."/>
            <person name="Nelson D.L."/>
            <person name="Nelson D.R."/>
            <person name="Nelson K.A."/>
            <person name="Nixon K."/>
            <person name="Nusskern D.R."/>
            <person name="Pacleb J.M."/>
            <person name="Palazzolo M."/>
            <person name="Pittman G.S."/>
            <person name="Pan S."/>
            <person name="Pollard J."/>
            <person name="Puri V."/>
            <person name="Reese M.G."/>
            <person name="Reinert K."/>
            <person name="Remington K."/>
            <person name="Saunders R.D.C."/>
            <person name="Scheeler F."/>
            <person name="Shen H."/>
            <person name="Shue B.C."/>
            <person name="Siden-Kiamos I."/>
            <person name="Simpson M."/>
            <person name="Skupski M.P."/>
            <person name="Smith T.J."/>
            <person name="Spier E."/>
            <person name="Spradling A.C."/>
            <person name="Stapleton M."/>
            <person name="Strong R."/>
            <person name="Sun E."/>
            <person name="Svirskas R."/>
            <person name="Tector C."/>
            <person name="Turner R."/>
            <person name="Venter E."/>
            <person name="Wang A.H."/>
            <person name="Wang X."/>
            <person name="Wang Z.-Y."/>
            <person name="Wassarman D.A."/>
            <person name="Weinstock G.M."/>
            <person name="Weissenbach J."/>
            <person name="Williams S.M."/>
            <person name="Woodage T."/>
            <person name="Worley K.C."/>
            <person name="Wu D."/>
            <person name="Yang S."/>
            <person name="Yao Q.A."/>
            <person name="Ye J."/>
            <person name="Yeh R.-F."/>
            <person name="Zaveri J.S."/>
            <person name="Zhan M."/>
            <person name="Zhang G."/>
            <person name="Zhao Q."/>
            <person name="Zheng L."/>
            <person name="Zheng X.H."/>
            <person name="Zhong F.N."/>
            <person name="Zhong W."/>
            <person name="Zhou X."/>
            <person name="Zhu S.C."/>
            <person name="Zhu X."/>
            <person name="Smith H.O."/>
            <person name="Gibbs R.A."/>
            <person name="Myers E.W."/>
            <person name="Rubin G.M."/>
            <person name="Venter J.C."/>
        </authorList>
    </citation>
    <scope>NUCLEOTIDE SEQUENCE [LARGE SCALE GENOMIC DNA]</scope>
    <source>
        <strain>Berkeley</strain>
    </source>
</reference>
<reference key="3">
    <citation type="journal article" date="2002" name="Genome Biol.">
        <title>Annotation of the Drosophila melanogaster euchromatic genome: a systematic review.</title>
        <authorList>
            <person name="Misra S."/>
            <person name="Crosby M.A."/>
            <person name="Mungall C.J."/>
            <person name="Matthews B.B."/>
            <person name="Campbell K.S."/>
            <person name="Hradecky P."/>
            <person name="Huang Y."/>
            <person name="Kaminker J.S."/>
            <person name="Millburn G.H."/>
            <person name="Prochnik S.E."/>
            <person name="Smith C.D."/>
            <person name="Tupy J.L."/>
            <person name="Whitfield E.J."/>
            <person name="Bayraktaroglu L."/>
            <person name="Berman B.P."/>
            <person name="Bettencourt B.R."/>
            <person name="Celniker S.E."/>
            <person name="de Grey A.D.N.J."/>
            <person name="Drysdale R.A."/>
            <person name="Harris N.L."/>
            <person name="Richter J."/>
            <person name="Russo S."/>
            <person name="Schroeder A.J."/>
            <person name="Shu S.Q."/>
            <person name="Stapleton M."/>
            <person name="Yamada C."/>
            <person name="Ashburner M."/>
            <person name="Gelbart W.M."/>
            <person name="Rubin G.M."/>
            <person name="Lewis S.E."/>
        </authorList>
    </citation>
    <scope>GENOME REANNOTATION</scope>
    <source>
        <strain>Berkeley</strain>
    </source>
</reference>
<reference key="4">
    <citation type="journal article" date="2002" name="Genome Biol.">
        <title>A Drosophila full-length cDNA resource.</title>
        <authorList>
            <person name="Stapleton M."/>
            <person name="Carlson J.W."/>
            <person name="Brokstein P."/>
            <person name="Yu C."/>
            <person name="Champe M."/>
            <person name="George R.A."/>
            <person name="Guarin H."/>
            <person name="Kronmiller B."/>
            <person name="Pacleb J.M."/>
            <person name="Park S."/>
            <person name="Wan K.H."/>
            <person name="Rubin G.M."/>
            <person name="Celniker S.E."/>
        </authorList>
    </citation>
    <scope>NUCLEOTIDE SEQUENCE [LARGE SCALE MRNA]</scope>
    <source>
        <strain>Berkeley</strain>
        <tissue>Embryo</tissue>
    </source>
</reference>
<evidence type="ECO:0000255" key="1">
    <source>
        <dbReference type="PROSITE-ProRule" id="PRU00541"/>
    </source>
</evidence>
<evidence type="ECO:0000255" key="2">
    <source>
        <dbReference type="PROSITE-ProRule" id="PRU00542"/>
    </source>
</evidence>
<evidence type="ECO:0000256" key="3">
    <source>
        <dbReference type="SAM" id="MobiDB-lite"/>
    </source>
</evidence>
<evidence type="ECO:0000305" key="4"/>
<gene>
    <name type="primary">Dbp45A</name>
    <name type="ORF">CG12759</name>
</gene>
<accession>Q07886</accession>
<accession>Q9V528</accession>
<protein>
    <recommendedName>
        <fullName>Probable ATP-dependent RNA helicase Dbp45A</fullName>
        <shortName>DEAD box protein 45A</shortName>
        <ecNumber>3.6.4.13</ecNumber>
    </recommendedName>
</protein>
<dbReference type="EC" id="3.6.4.13"/>
<dbReference type="EMBL" id="L13612">
    <property type="protein sequence ID" value="AAA16339.1"/>
    <property type="molecule type" value="Unassigned_DNA"/>
</dbReference>
<dbReference type="EMBL" id="Z23266">
    <property type="protein sequence ID" value="CAA80804.1"/>
    <property type="molecule type" value="Genomic_DNA"/>
</dbReference>
<dbReference type="EMBL" id="AE013599">
    <property type="protein sequence ID" value="AAF58994.1"/>
    <property type="molecule type" value="Genomic_DNA"/>
</dbReference>
<dbReference type="EMBL" id="AY058728">
    <property type="protein sequence ID" value="AAL13957.1"/>
    <property type="molecule type" value="mRNA"/>
</dbReference>
<dbReference type="PIR" id="S38329">
    <property type="entry name" value="S38329"/>
</dbReference>
<dbReference type="RefSeq" id="NP_476927.1">
    <property type="nucleotide sequence ID" value="NM_057579.5"/>
</dbReference>
<dbReference type="SMR" id="Q07886"/>
<dbReference type="FunCoup" id="Q07886">
    <property type="interactions" value="1358"/>
</dbReference>
<dbReference type="IntAct" id="Q07886">
    <property type="interactions" value="18"/>
</dbReference>
<dbReference type="STRING" id="7227.FBpp0087645"/>
<dbReference type="PaxDb" id="7227-FBpp0087645"/>
<dbReference type="DNASU" id="35917"/>
<dbReference type="EnsemblMetazoa" id="FBtr0088564">
    <property type="protein sequence ID" value="FBpp0087645"/>
    <property type="gene ID" value="FBgn0010220"/>
</dbReference>
<dbReference type="GeneID" id="35917"/>
<dbReference type="KEGG" id="dme:Dmel_CG12759"/>
<dbReference type="AGR" id="FB:FBgn0010220"/>
<dbReference type="CTD" id="35917"/>
<dbReference type="FlyBase" id="FBgn0010220">
    <property type="gene designation" value="Dbp45A"/>
</dbReference>
<dbReference type="VEuPathDB" id="VectorBase:FBgn0010220"/>
<dbReference type="eggNOG" id="KOG0340">
    <property type="taxonomic scope" value="Eukaryota"/>
</dbReference>
<dbReference type="GeneTree" id="ENSGT00730000111231"/>
<dbReference type="HOGENOM" id="CLU_003041_1_1_1"/>
<dbReference type="InParanoid" id="Q07886"/>
<dbReference type="OMA" id="IMIFTDT"/>
<dbReference type="OrthoDB" id="10261904at2759"/>
<dbReference type="PhylomeDB" id="Q07886"/>
<dbReference type="Reactome" id="R-DME-6791226">
    <property type="pathway name" value="Major pathway of rRNA processing in the nucleolus and cytosol"/>
</dbReference>
<dbReference type="BioGRID-ORCS" id="35917">
    <property type="hits" value="1 hit in 1 CRISPR screen"/>
</dbReference>
<dbReference type="GenomeRNAi" id="35917"/>
<dbReference type="PRO" id="PR:Q07886"/>
<dbReference type="Proteomes" id="UP000000803">
    <property type="component" value="Chromosome 2R"/>
</dbReference>
<dbReference type="Bgee" id="FBgn0010220">
    <property type="expression patterns" value="Expressed in adult enteroendocrine precursor cell in adult midgut (Drosophila) and 73 other cell types or tissues"/>
</dbReference>
<dbReference type="GO" id="GO:0005634">
    <property type="term" value="C:nucleus"/>
    <property type="evidence" value="ECO:0000318"/>
    <property type="project" value="GO_Central"/>
</dbReference>
<dbReference type="GO" id="GO:0005524">
    <property type="term" value="F:ATP binding"/>
    <property type="evidence" value="ECO:0007669"/>
    <property type="project" value="UniProtKB-KW"/>
</dbReference>
<dbReference type="GO" id="GO:0016887">
    <property type="term" value="F:ATP hydrolysis activity"/>
    <property type="evidence" value="ECO:0007669"/>
    <property type="project" value="RHEA"/>
</dbReference>
<dbReference type="GO" id="GO:0003723">
    <property type="term" value="F:RNA binding"/>
    <property type="evidence" value="ECO:0007669"/>
    <property type="project" value="UniProtKB-KW"/>
</dbReference>
<dbReference type="GO" id="GO:0003724">
    <property type="term" value="F:RNA helicase activity"/>
    <property type="evidence" value="ECO:0000250"/>
    <property type="project" value="FlyBase"/>
</dbReference>
<dbReference type="GO" id="GO:0000381">
    <property type="term" value="P:regulation of alternative mRNA splicing, via spliceosome"/>
    <property type="evidence" value="ECO:0007001"/>
    <property type="project" value="FlyBase"/>
</dbReference>
<dbReference type="GO" id="GO:0006364">
    <property type="term" value="P:rRNA processing"/>
    <property type="evidence" value="ECO:0000318"/>
    <property type="project" value="GO_Central"/>
</dbReference>
<dbReference type="CDD" id="cd17955">
    <property type="entry name" value="DEADc_DDX49"/>
    <property type="match status" value="1"/>
</dbReference>
<dbReference type="CDD" id="cd18787">
    <property type="entry name" value="SF2_C_DEAD"/>
    <property type="match status" value="1"/>
</dbReference>
<dbReference type="FunFam" id="3.40.50.300:FF:001515">
    <property type="entry name" value="ATP-dependent RNA helicase, putative"/>
    <property type="match status" value="1"/>
</dbReference>
<dbReference type="FunFam" id="3.40.50.300:FF:002790">
    <property type="entry name" value="Dbp45A"/>
    <property type="match status" value="1"/>
</dbReference>
<dbReference type="Gene3D" id="3.40.50.300">
    <property type="entry name" value="P-loop containing nucleotide triphosphate hydrolases"/>
    <property type="match status" value="2"/>
</dbReference>
<dbReference type="InterPro" id="IPR011545">
    <property type="entry name" value="DEAD/DEAH_box_helicase_dom"/>
</dbReference>
<dbReference type="InterPro" id="IPR050079">
    <property type="entry name" value="DEAD_box_RNA_helicase"/>
</dbReference>
<dbReference type="InterPro" id="IPR014001">
    <property type="entry name" value="Helicase_ATP-bd"/>
</dbReference>
<dbReference type="InterPro" id="IPR001650">
    <property type="entry name" value="Helicase_C-like"/>
</dbReference>
<dbReference type="InterPro" id="IPR027417">
    <property type="entry name" value="P-loop_NTPase"/>
</dbReference>
<dbReference type="InterPro" id="IPR000629">
    <property type="entry name" value="RNA-helicase_DEAD-box_CS"/>
</dbReference>
<dbReference type="InterPro" id="IPR014014">
    <property type="entry name" value="RNA_helicase_DEAD_Q_motif"/>
</dbReference>
<dbReference type="PANTHER" id="PTHR47959:SF24">
    <property type="entry name" value="ATP-DEPENDENT RNA HELICASE"/>
    <property type="match status" value="1"/>
</dbReference>
<dbReference type="PANTHER" id="PTHR47959">
    <property type="entry name" value="ATP-DEPENDENT RNA HELICASE RHLE-RELATED"/>
    <property type="match status" value="1"/>
</dbReference>
<dbReference type="Pfam" id="PF00270">
    <property type="entry name" value="DEAD"/>
    <property type="match status" value="1"/>
</dbReference>
<dbReference type="Pfam" id="PF00271">
    <property type="entry name" value="Helicase_C"/>
    <property type="match status" value="1"/>
</dbReference>
<dbReference type="SMART" id="SM00487">
    <property type="entry name" value="DEXDc"/>
    <property type="match status" value="1"/>
</dbReference>
<dbReference type="SMART" id="SM00490">
    <property type="entry name" value="HELICc"/>
    <property type="match status" value="1"/>
</dbReference>
<dbReference type="SUPFAM" id="SSF52540">
    <property type="entry name" value="P-loop containing nucleoside triphosphate hydrolases"/>
    <property type="match status" value="1"/>
</dbReference>
<dbReference type="PROSITE" id="PS00039">
    <property type="entry name" value="DEAD_ATP_HELICASE"/>
    <property type="match status" value="1"/>
</dbReference>
<dbReference type="PROSITE" id="PS51192">
    <property type="entry name" value="HELICASE_ATP_BIND_1"/>
    <property type="match status" value="1"/>
</dbReference>
<dbReference type="PROSITE" id="PS51194">
    <property type="entry name" value="HELICASE_CTER"/>
    <property type="match status" value="1"/>
</dbReference>
<dbReference type="PROSITE" id="PS51195">
    <property type="entry name" value="Q_MOTIF"/>
    <property type="match status" value="1"/>
</dbReference>
<name>DDX49_DROME</name>
<sequence>MQRKEANPFQILGLRPWLVKQLTKLGLKGATPIQQKCIPAILAGQDCIGAAKTGSGKTFAFALPILERLSEEPVSHFALVLTPTHELAYQISEQFLVAGQAMGVRVCVVSGGTDQMVESQKLMQRPHIVVAMPGRLADHLTGCDTFSFDNLKYLVVDEADRMLNGDFDESLSIIERCLPKTRQNLFFSATMKDFIKESSIFPIASDCFEWSQDSDVATVETLDQRYLLCADYDRDMVLIEALRKYREENENANVMIFTNTKKYCQLLSMTLKNMEIDNVCLHGFMRQKERVAALSRFKSNQIRTLIATDVAARGLDIPSVELVMNHMLPRTPKEYIHRVGRTARAGRKGMSISIFRFPRDLELLAAIEEEINTKLTEHPIDQRMVERIFMQVNVTRRESEMQLDNNDFDERAQNYRRKTWIMEGKDPDQMEALYRKKQKDKLREIRRKRKLQHAEPAASEEGKALLQDERFKSVDSARFEKKGKGRSRATQEDTPTKPLKRLNKEKPVAQKGRADVKKDKA</sequence>
<keyword id="KW-0067">ATP-binding</keyword>
<keyword id="KW-0347">Helicase</keyword>
<keyword id="KW-0378">Hydrolase</keyword>
<keyword id="KW-0547">Nucleotide-binding</keyword>
<keyword id="KW-1185">Reference proteome</keyword>
<keyword id="KW-0694">RNA-binding</keyword>
<comment type="function">
    <text>Probable ATP-binding RNA helicase.</text>
</comment>
<comment type="catalytic activity">
    <reaction>
        <text>ATP + H2O = ADP + phosphate + H(+)</text>
        <dbReference type="Rhea" id="RHEA:13065"/>
        <dbReference type="ChEBI" id="CHEBI:15377"/>
        <dbReference type="ChEBI" id="CHEBI:15378"/>
        <dbReference type="ChEBI" id="CHEBI:30616"/>
        <dbReference type="ChEBI" id="CHEBI:43474"/>
        <dbReference type="ChEBI" id="CHEBI:456216"/>
        <dbReference type="EC" id="3.6.4.13"/>
    </reaction>
</comment>
<comment type="similarity">
    <text evidence="4">Belongs to the DEAD box helicase family. DDX49/DBP8 subfamily.</text>
</comment>
<organism>
    <name type="scientific">Drosophila melanogaster</name>
    <name type="common">Fruit fly</name>
    <dbReference type="NCBI Taxonomy" id="7227"/>
    <lineage>
        <taxon>Eukaryota</taxon>
        <taxon>Metazoa</taxon>
        <taxon>Ecdysozoa</taxon>
        <taxon>Arthropoda</taxon>
        <taxon>Hexapoda</taxon>
        <taxon>Insecta</taxon>
        <taxon>Pterygota</taxon>
        <taxon>Neoptera</taxon>
        <taxon>Endopterygota</taxon>
        <taxon>Diptera</taxon>
        <taxon>Brachycera</taxon>
        <taxon>Muscomorpha</taxon>
        <taxon>Ephydroidea</taxon>
        <taxon>Drosophilidae</taxon>
        <taxon>Drosophila</taxon>
        <taxon>Sophophora</taxon>
    </lineage>
</organism>